<accession>Q13BG6</accession>
<feature type="chain" id="PRO_0000390208" description="NADH-quinone oxidoreductase subunit K">
    <location>
        <begin position="1"/>
        <end position="102"/>
    </location>
</feature>
<feature type="transmembrane region" description="Helical" evidence="1">
    <location>
        <begin position="6"/>
        <end position="26"/>
    </location>
</feature>
<feature type="transmembrane region" description="Helical" evidence="1">
    <location>
        <begin position="30"/>
        <end position="50"/>
    </location>
</feature>
<feature type="transmembrane region" description="Helical" evidence="1">
    <location>
        <begin position="63"/>
        <end position="83"/>
    </location>
</feature>
<evidence type="ECO:0000255" key="1">
    <source>
        <dbReference type="HAMAP-Rule" id="MF_01456"/>
    </source>
</evidence>
<name>NUOK_RHOPS</name>
<dbReference type="EC" id="7.1.1.-" evidence="1"/>
<dbReference type="EMBL" id="CP000283">
    <property type="protein sequence ID" value="ABE38573.1"/>
    <property type="molecule type" value="Genomic_DNA"/>
</dbReference>
<dbReference type="SMR" id="Q13BG6"/>
<dbReference type="STRING" id="316057.RPD_1335"/>
<dbReference type="KEGG" id="rpd:RPD_1335"/>
<dbReference type="eggNOG" id="COG0713">
    <property type="taxonomic scope" value="Bacteria"/>
</dbReference>
<dbReference type="HOGENOM" id="CLU_144724_0_1_5"/>
<dbReference type="BioCyc" id="RPAL316057:RPD_RS06760-MONOMER"/>
<dbReference type="Proteomes" id="UP000001818">
    <property type="component" value="Chromosome"/>
</dbReference>
<dbReference type="GO" id="GO:0030964">
    <property type="term" value="C:NADH dehydrogenase complex"/>
    <property type="evidence" value="ECO:0007669"/>
    <property type="project" value="TreeGrafter"/>
</dbReference>
<dbReference type="GO" id="GO:0005886">
    <property type="term" value="C:plasma membrane"/>
    <property type="evidence" value="ECO:0007669"/>
    <property type="project" value="UniProtKB-SubCell"/>
</dbReference>
<dbReference type="GO" id="GO:0050136">
    <property type="term" value="F:NADH:ubiquinone reductase (non-electrogenic) activity"/>
    <property type="evidence" value="ECO:0007669"/>
    <property type="project" value="UniProtKB-UniRule"/>
</dbReference>
<dbReference type="GO" id="GO:0048038">
    <property type="term" value="F:quinone binding"/>
    <property type="evidence" value="ECO:0007669"/>
    <property type="project" value="UniProtKB-KW"/>
</dbReference>
<dbReference type="GO" id="GO:0042773">
    <property type="term" value="P:ATP synthesis coupled electron transport"/>
    <property type="evidence" value="ECO:0007669"/>
    <property type="project" value="InterPro"/>
</dbReference>
<dbReference type="Gene3D" id="1.10.287.3510">
    <property type="match status" value="1"/>
</dbReference>
<dbReference type="HAMAP" id="MF_01456">
    <property type="entry name" value="NDH1_NuoK"/>
    <property type="match status" value="1"/>
</dbReference>
<dbReference type="InterPro" id="IPR001133">
    <property type="entry name" value="NADH_UbQ_OxRdtase_chain4L/K"/>
</dbReference>
<dbReference type="InterPro" id="IPR039428">
    <property type="entry name" value="NUOK/Mnh_C1-like"/>
</dbReference>
<dbReference type="NCBIfam" id="NF004320">
    <property type="entry name" value="PRK05715.1-2"/>
    <property type="match status" value="1"/>
</dbReference>
<dbReference type="PANTHER" id="PTHR11434:SF16">
    <property type="entry name" value="NADH-UBIQUINONE OXIDOREDUCTASE CHAIN 4L"/>
    <property type="match status" value="1"/>
</dbReference>
<dbReference type="PANTHER" id="PTHR11434">
    <property type="entry name" value="NADH-UBIQUINONE OXIDOREDUCTASE SUBUNIT ND4L"/>
    <property type="match status" value="1"/>
</dbReference>
<dbReference type="Pfam" id="PF00420">
    <property type="entry name" value="Oxidored_q2"/>
    <property type="match status" value="1"/>
</dbReference>
<sequence>MTGSDLIAMMILAAGLFAIGLFGVLARRGIMFQLVALEVALSGPALGFVAAGAYHADPQGQGMFILVLTLAAAEVAVGLALFLRIRRIAGSDDSDVISGMKG</sequence>
<keyword id="KW-0997">Cell inner membrane</keyword>
<keyword id="KW-1003">Cell membrane</keyword>
<keyword id="KW-0472">Membrane</keyword>
<keyword id="KW-0520">NAD</keyword>
<keyword id="KW-0874">Quinone</keyword>
<keyword id="KW-1278">Translocase</keyword>
<keyword id="KW-0812">Transmembrane</keyword>
<keyword id="KW-1133">Transmembrane helix</keyword>
<keyword id="KW-0813">Transport</keyword>
<keyword id="KW-0830">Ubiquinone</keyword>
<organism>
    <name type="scientific">Rhodopseudomonas palustris (strain BisB5)</name>
    <dbReference type="NCBI Taxonomy" id="316057"/>
    <lineage>
        <taxon>Bacteria</taxon>
        <taxon>Pseudomonadati</taxon>
        <taxon>Pseudomonadota</taxon>
        <taxon>Alphaproteobacteria</taxon>
        <taxon>Hyphomicrobiales</taxon>
        <taxon>Nitrobacteraceae</taxon>
        <taxon>Rhodopseudomonas</taxon>
    </lineage>
</organism>
<comment type="function">
    <text evidence="1">NDH-1 shuttles electrons from NADH, via FMN and iron-sulfur (Fe-S) centers, to quinones in the respiratory chain. The immediate electron acceptor for the enzyme in this species is believed to be ubiquinone. Couples the redox reaction to proton translocation (for every two electrons transferred, four hydrogen ions are translocated across the cytoplasmic membrane), and thus conserves the redox energy in a proton gradient.</text>
</comment>
<comment type="catalytic activity">
    <reaction evidence="1">
        <text>a quinone + NADH + 5 H(+)(in) = a quinol + NAD(+) + 4 H(+)(out)</text>
        <dbReference type="Rhea" id="RHEA:57888"/>
        <dbReference type="ChEBI" id="CHEBI:15378"/>
        <dbReference type="ChEBI" id="CHEBI:24646"/>
        <dbReference type="ChEBI" id="CHEBI:57540"/>
        <dbReference type="ChEBI" id="CHEBI:57945"/>
        <dbReference type="ChEBI" id="CHEBI:132124"/>
    </reaction>
</comment>
<comment type="subunit">
    <text evidence="1">NDH-1 is composed of 14 different subunits. Subunits NuoA, H, J, K, L, M, N constitute the membrane sector of the complex.</text>
</comment>
<comment type="subcellular location">
    <subcellularLocation>
        <location evidence="1">Cell inner membrane</location>
        <topology evidence="1">Multi-pass membrane protein</topology>
    </subcellularLocation>
</comment>
<comment type="similarity">
    <text evidence="1">Belongs to the complex I subunit 4L family.</text>
</comment>
<gene>
    <name evidence="1" type="primary">nuoK</name>
    <name type="ordered locus">RPD_1335</name>
</gene>
<protein>
    <recommendedName>
        <fullName evidence="1">NADH-quinone oxidoreductase subunit K</fullName>
        <ecNumber evidence="1">7.1.1.-</ecNumber>
    </recommendedName>
    <alternativeName>
        <fullName evidence="1">NADH dehydrogenase I subunit K</fullName>
    </alternativeName>
    <alternativeName>
        <fullName evidence="1">NDH-1 subunit K</fullName>
    </alternativeName>
</protein>
<reference key="1">
    <citation type="submission" date="2006-03" db="EMBL/GenBank/DDBJ databases">
        <title>Complete sequence of Rhodopseudomonas palustris BisB5.</title>
        <authorList>
            <consortium name="US DOE Joint Genome Institute"/>
            <person name="Copeland A."/>
            <person name="Lucas S."/>
            <person name="Lapidus A."/>
            <person name="Barry K."/>
            <person name="Detter J.C."/>
            <person name="Glavina del Rio T."/>
            <person name="Hammon N."/>
            <person name="Israni S."/>
            <person name="Dalin E."/>
            <person name="Tice H."/>
            <person name="Pitluck S."/>
            <person name="Chain P."/>
            <person name="Malfatti S."/>
            <person name="Shin M."/>
            <person name="Vergez L."/>
            <person name="Schmutz J."/>
            <person name="Larimer F."/>
            <person name="Land M."/>
            <person name="Hauser L."/>
            <person name="Pelletier D.A."/>
            <person name="Kyrpides N."/>
            <person name="Lykidis A."/>
            <person name="Oda Y."/>
            <person name="Harwood C.S."/>
            <person name="Richardson P."/>
        </authorList>
    </citation>
    <scope>NUCLEOTIDE SEQUENCE [LARGE SCALE GENOMIC DNA]</scope>
    <source>
        <strain>BisB5</strain>
    </source>
</reference>
<proteinExistence type="inferred from homology"/>